<dbReference type="EC" id="6.3.4.5" evidence="1"/>
<dbReference type="EMBL" id="CP000482">
    <property type="protein sequence ID" value="ABL00765.1"/>
    <property type="molecule type" value="Genomic_DNA"/>
</dbReference>
<dbReference type="RefSeq" id="WP_011736996.1">
    <property type="nucleotide sequence ID" value="NC_008609.1"/>
</dbReference>
<dbReference type="SMR" id="A1ATU4"/>
<dbReference type="STRING" id="338966.Ppro_3171"/>
<dbReference type="KEGG" id="ppd:Ppro_3171"/>
<dbReference type="eggNOG" id="COG0137">
    <property type="taxonomic scope" value="Bacteria"/>
</dbReference>
<dbReference type="HOGENOM" id="CLU_032784_4_2_7"/>
<dbReference type="OrthoDB" id="9801641at2"/>
<dbReference type="UniPathway" id="UPA00068">
    <property type="reaction ID" value="UER00113"/>
</dbReference>
<dbReference type="Proteomes" id="UP000006732">
    <property type="component" value="Chromosome"/>
</dbReference>
<dbReference type="GO" id="GO:0005737">
    <property type="term" value="C:cytoplasm"/>
    <property type="evidence" value="ECO:0007669"/>
    <property type="project" value="UniProtKB-SubCell"/>
</dbReference>
<dbReference type="GO" id="GO:0004055">
    <property type="term" value="F:argininosuccinate synthase activity"/>
    <property type="evidence" value="ECO:0007669"/>
    <property type="project" value="UniProtKB-UniRule"/>
</dbReference>
<dbReference type="GO" id="GO:0005524">
    <property type="term" value="F:ATP binding"/>
    <property type="evidence" value="ECO:0007669"/>
    <property type="project" value="UniProtKB-UniRule"/>
</dbReference>
<dbReference type="GO" id="GO:0000053">
    <property type="term" value="P:argininosuccinate metabolic process"/>
    <property type="evidence" value="ECO:0007669"/>
    <property type="project" value="TreeGrafter"/>
</dbReference>
<dbReference type="GO" id="GO:0006526">
    <property type="term" value="P:L-arginine biosynthetic process"/>
    <property type="evidence" value="ECO:0007669"/>
    <property type="project" value="UniProtKB-UniRule"/>
</dbReference>
<dbReference type="GO" id="GO:0000050">
    <property type="term" value="P:urea cycle"/>
    <property type="evidence" value="ECO:0007669"/>
    <property type="project" value="TreeGrafter"/>
</dbReference>
<dbReference type="CDD" id="cd01999">
    <property type="entry name" value="ASS"/>
    <property type="match status" value="1"/>
</dbReference>
<dbReference type="FunFam" id="3.40.50.620:FF:000019">
    <property type="entry name" value="Argininosuccinate synthase"/>
    <property type="match status" value="1"/>
</dbReference>
<dbReference type="FunFam" id="3.90.1260.10:FF:000007">
    <property type="entry name" value="Argininosuccinate synthase"/>
    <property type="match status" value="1"/>
</dbReference>
<dbReference type="Gene3D" id="3.90.1260.10">
    <property type="entry name" value="Argininosuccinate synthetase, chain A, domain 2"/>
    <property type="match status" value="1"/>
</dbReference>
<dbReference type="Gene3D" id="3.40.50.620">
    <property type="entry name" value="HUPs"/>
    <property type="match status" value="1"/>
</dbReference>
<dbReference type="Gene3D" id="1.20.5.470">
    <property type="entry name" value="Single helix bin"/>
    <property type="match status" value="1"/>
</dbReference>
<dbReference type="HAMAP" id="MF_00005">
    <property type="entry name" value="Arg_succ_synth_type1"/>
    <property type="match status" value="1"/>
</dbReference>
<dbReference type="InterPro" id="IPR048268">
    <property type="entry name" value="Arginosuc_syn_C"/>
</dbReference>
<dbReference type="InterPro" id="IPR048267">
    <property type="entry name" value="Arginosuc_syn_N"/>
</dbReference>
<dbReference type="InterPro" id="IPR001518">
    <property type="entry name" value="Arginosuc_synth"/>
</dbReference>
<dbReference type="InterPro" id="IPR018223">
    <property type="entry name" value="Arginosuc_synth_CS"/>
</dbReference>
<dbReference type="InterPro" id="IPR023434">
    <property type="entry name" value="Arginosuc_synth_type_1_subfam"/>
</dbReference>
<dbReference type="InterPro" id="IPR024074">
    <property type="entry name" value="AS_cat/multimer_dom_body"/>
</dbReference>
<dbReference type="InterPro" id="IPR014729">
    <property type="entry name" value="Rossmann-like_a/b/a_fold"/>
</dbReference>
<dbReference type="NCBIfam" id="TIGR00032">
    <property type="entry name" value="argG"/>
    <property type="match status" value="1"/>
</dbReference>
<dbReference type="NCBIfam" id="NF001770">
    <property type="entry name" value="PRK00509.1"/>
    <property type="match status" value="1"/>
</dbReference>
<dbReference type="PANTHER" id="PTHR11587">
    <property type="entry name" value="ARGININOSUCCINATE SYNTHASE"/>
    <property type="match status" value="1"/>
</dbReference>
<dbReference type="PANTHER" id="PTHR11587:SF2">
    <property type="entry name" value="ARGININOSUCCINATE SYNTHASE"/>
    <property type="match status" value="1"/>
</dbReference>
<dbReference type="Pfam" id="PF20979">
    <property type="entry name" value="Arginosuc_syn_C"/>
    <property type="match status" value="1"/>
</dbReference>
<dbReference type="Pfam" id="PF00764">
    <property type="entry name" value="Arginosuc_synth"/>
    <property type="match status" value="1"/>
</dbReference>
<dbReference type="SUPFAM" id="SSF52402">
    <property type="entry name" value="Adenine nucleotide alpha hydrolases-like"/>
    <property type="match status" value="1"/>
</dbReference>
<dbReference type="SUPFAM" id="SSF69864">
    <property type="entry name" value="Argininosuccinate synthetase, C-terminal domain"/>
    <property type="match status" value="1"/>
</dbReference>
<dbReference type="PROSITE" id="PS00564">
    <property type="entry name" value="ARGININOSUCCIN_SYN_1"/>
    <property type="match status" value="1"/>
</dbReference>
<dbReference type="PROSITE" id="PS00565">
    <property type="entry name" value="ARGININOSUCCIN_SYN_2"/>
    <property type="match status" value="1"/>
</dbReference>
<proteinExistence type="inferred from homology"/>
<keyword id="KW-0028">Amino-acid biosynthesis</keyword>
<keyword id="KW-0055">Arginine biosynthesis</keyword>
<keyword id="KW-0067">ATP-binding</keyword>
<keyword id="KW-0963">Cytoplasm</keyword>
<keyword id="KW-0436">Ligase</keyword>
<keyword id="KW-0547">Nucleotide-binding</keyword>
<keyword id="KW-1185">Reference proteome</keyword>
<feature type="chain" id="PRO_1000000416" description="Argininosuccinate synthase">
    <location>
        <begin position="1"/>
        <end position="408"/>
    </location>
</feature>
<feature type="binding site" evidence="1">
    <location>
        <begin position="14"/>
        <end position="22"/>
    </location>
    <ligand>
        <name>ATP</name>
        <dbReference type="ChEBI" id="CHEBI:30616"/>
    </ligand>
</feature>
<feature type="binding site" evidence="1">
    <location>
        <position position="41"/>
    </location>
    <ligand>
        <name>ATP</name>
        <dbReference type="ChEBI" id="CHEBI:30616"/>
    </ligand>
</feature>
<feature type="binding site" evidence="1">
    <location>
        <position position="92"/>
    </location>
    <ligand>
        <name>L-citrulline</name>
        <dbReference type="ChEBI" id="CHEBI:57743"/>
    </ligand>
</feature>
<feature type="binding site" evidence="1">
    <location>
        <position position="97"/>
    </location>
    <ligand>
        <name>L-citrulline</name>
        <dbReference type="ChEBI" id="CHEBI:57743"/>
    </ligand>
</feature>
<feature type="binding site" evidence="1">
    <location>
        <position position="122"/>
    </location>
    <ligand>
        <name>ATP</name>
        <dbReference type="ChEBI" id="CHEBI:30616"/>
    </ligand>
</feature>
<feature type="binding site" evidence="1">
    <location>
        <position position="124"/>
    </location>
    <ligand>
        <name>L-aspartate</name>
        <dbReference type="ChEBI" id="CHEBI:29991"/>
    </ligand>
</feature>
<feature type="binding site" evidence="1">
    <location>
        <position position="128"/>
    </location>
    <ligand>
        <name>L-aspartate</name>
        <dbReference type="ChEBI" id="CHEBI:29991"/>
    </ligand>
</feature>
<feature type="binding site" evidence="1">
    <location>
        <position position="128"/>
    </location>
    <ligand>
        <name>L-citrulline</name>
        <dbReference type="ChEBI" id="CHEBI:57743"/>
    </ligand>
</feature>
<feature type="binding site" evidence="1">
    <location>
        <position position="129"/>
    </location>
    <ligand>
        <name>L-aspartate</name>
        <dbReference type="ChEBI" id="CHEBI:29991"/>
    </ligand>
</feature>
<feature type="binding site" evidence="1">
    <location>
        <position position="132"/>
    </location>
    <ligand>
        <name>L-citrulline</name>
        <dbReference type="ChEBI" id="CHEBI:57743"/>
    </ligand>
</feature>
<feature type="binding site" evidence="1">
    <location>
        <position position="181"/>
    </location>
    <ligand>
        <name>L-citrulline</name>
        <dbReference type="ChEBI" id="CHEBI:57743"/>
    </ligand>
</feature>
<feature type="binding site" evidence="1">
    <location>
        <position position="190"/>
    </location>
    <ligand>
        <name>L-citrulline</name>
        <dbReference type="ChEBI" id="CHEBI:57743"/>
    </ligand>
</feature>
<feature type="binding site" evidence="1">
    <location>
        <position position="266"/>
    </location>
    <ligand>
        <name>L-citrulline</name>
        <dbReference type="ChEBI" id="CHEBI:57743"/>
    </ligand>
</feature>
<feature type="binding site" evidence="1">
    <location>
        <position position="278"/>
    </location>
    <ligand>
        <name>L-citrulline</name>
        <dbReference type="ChEBI" id="CHEBI:57743"/>
    </ligand>
</feature>
<comment type="catalytic activity">
    <reaction evidence="1">
        <text>L-citrulline + L-aspartate + ATP = 2-(N(omega)-L-arginino)succinate + AMP + diphosphate + H(+)</text>
        <dbReference type="Rhea" id="RHEA:10932"/>
        <dbReference type="ChEBI" id="CHEBI:15378"/>
        <dbReference type="ChEBI" id="CHEBI:29991"/>
        <dbReference type="ChEBI" id="CHEBI:30616"/>
        <dbReference type="ChEBI" id="CHEBI:33019"/>
        <dbReference type="ChEBI" id="CHEBI:57472"/>
        <dbReference type="ChEBI" id="CHEBI:57743"/>
        <dbReference type="ChEBI" id="CHEBI:456215"/>
        <dbReference type="EC" id="6.3.4.5"/>
    </reaction>
</comment>
<comment type="pathway">
    <text evidence="1">Amino-acid biosynthesis; L-arginine biosynthesis; L-arginine from L-ornithine and carbamoyl phosphate: step 2/3.</text>
</comment>
<comment type="subunit">
    <text evidence="1">Homotetramer.</text>
</comment>
<comment type="subcellular location">
    <subcellularLocation>
        <location evidence="1">Cytoplasm</location>
    </subcellularLocation>
</comment>
<comment type="similarity">
    <text evidence="1">Belongs to the argininosuccinate synthase family. Type 1 subfamily.</text>
</comment>
<gene>
    <name evidence="1" type="primary">argG</name>
    <name type="ordered locus">Ppro_3171</name>
</gene>
<evidence type="ECO:0000255" key="1">
    <source>
        <dbReference type="HAMAP-Rule" id="MF_00005"/>
    </source>
</evidence>
<reference key="1">
    <citation type="submission" date="2006-10" db="EMBL/GenBank/DDBJ databases">
        <title>Complete sequence of chromosome of Pelobacter propionicus DSM 2379.</title>
        <authorList>
            <consortium name="US DOE Joint Genome Institute"/>
            <person name="Copeland A."/>
            <person name="Lucas S."/>
            <person name="Lapidus A."/>
            <person name="Barry K."/>
            <person name="Detter J.C."/>
            <person name="Glavina del Rio T."/>
            <person name="Hammon N."/>
            <person name="Israni S."/>
            <person name="Dalin E."/>
            <person name="Tice H."/>
            <person name="Pitluck S."/>
            <person name="Saunders E."/>
            <person name="Brettin T."/>
            <person name="Bruce D."/>
            <person name="Han C."/>
            <person name="Tapia R."/>
            <person name="Schmutz J."/>
            <person name="Larimer F."/>
            <person name="Land M."/>
            <person name="Hauser L."/>
            <person name="Kyrpides N."/>
            <person name="Kim E."/>
            <person name="Lovley D."/>
            <person name="Richardson P."/>
        </authorList>
    </citation>
    <scope>NUCLEOTIDE SEQUENCE [LARGE SCALE GENOMIC DNA]</scope>
    <source>
        <strain>DSM 2379 / NBRC 103807 / OttBd1</strain>
    </source>
</reference>
<protein>
    <recommendedName>
        <fullName evidence="1">Argininosuccinate synthase</fullName>
        <ecNumber evidence="1">6.3.4.5</ecNumber>
    </recommendedName>
    <alternativeName>
        <fullName evidence="1">Citrulline--aspartate ligase</fullName>
    </alternativeName>
</protein>
<organism>
    <name type="scientific">Pelobacter propionicus (strain DSM 2379 / NBRC 103807 / OttBd1)</name>
    <dbReference type="NCBI Taxonomy" id="338966"/>
    <lineage>
        <taxon>Bacteria</taxon>
        <taxon>Pseudomonadati</taxon>
        <taxon>Thermodesulfobacteriota</taxon>
        <taxon>Desulfuromonadia</taxon>
        <taxon>Desulfuromonadales</taxon>
        <taxon>Desulfuromonadaceae</taxon>
        <taxon>Pelobacter</taxon>
    </lineage>
</organism>
<sequence>MTQQKMDIKNVVLAYSGGLDTSIILKWLKNEYGCRVVAFSADLGQGEELDPVREKALATGADVVYIDDLREEFVRDFVFPMFRANAIYEGHYLLGTSIARPLIAKRQMEIAAKEGCDAVSHGSTGKGNDQVRFELGYYHFNPNIKIVAPWRTWDLNSRQALIDYAKKNGIPVPVTKKRPWSSDRNLLHISFEGGILEDTWAEAPEEMYVLTTAPEKAPNKPQYVEIEFKNGNAVAVDGEKMTPAQLLAHLNYLGGQHGIGRVDLLENRSVGMKSRGVYETPGGTILREAHMAVEQITMDREVMRIRDGLIPEYARLVYAGYWFSPEREMLQALIDDSQKCVNGVARLKLYKGYCRTVGRKSDTDSLFNQDFATFEKDQVYNQADAEGFIRINSLRLRIRSMMQAAKKK</sequence>
<accession>A1ATU4</accession>
<name>ASSY_PELPD</name>